<dbReference type="EC" id="6.3.5.3" evidence="1"/>
<dbReference type="EMBL" id="CP001398">
    <property type="protein sequence ID" value="ACS33258.1"/>
    <property type="molecule type" value="Genomic_DNA"/>
</dbReference>
<dbReference type="RefSeq" id="WP_015858376.1">
    <property type="nucleotide sequence ID" value="NC_012804.1"/>
</dbReference>
<dbReference type="SMR" id="C5A4U6"/>
<dbReference type="STRING" id="593117.TGAM_0756"/>
<dbReference type="PaxDb" id="593117-TGAM_0756"/>
<dbReference type="GeneID" id="7987730"/>
<dbReference type="KEGG" id="tga:TGAM_0756"/>
<dbReference type="PATRIC" id="fig|593117.10.peg.754"/>
<dbReference type="eggNOG" id="arCOG00641">
    <property type="taxonomic scope" value="Archaea"/>
</dbReference>
<dbReference type="HOGENOM" id="CLU_003100_0_1_2"/>
<dbReference type="OrthoDB" id="8251at2157"/>
<dbReference type="UniPathway" id="UPA00074">
    <property type="reaction ID" value="UER00128"/>
</dbReference>
<dbReference type="Proteomes" id="UP000001488">
    <property type="component" value="Chromosome"/>
</dbReference>
<dbReference type="GO" id="GO:0005737">
    <property type="term" value="C:cytoplasm"/>
    <property type="evidence" value="ECO:0007669"/>
    <property type="project" value="UniProtKB-SubCell"/>
</dbReference>
<dbReference type="GO" id="GO:0005524">
    <property type="term" value="F:ATP binding"/>
    <property type="evidence" value="ECO:0007669"/>
    <property type="project" value="UniProtKB-UniRule"/>
</dbReference>
<dbReference type="GO" id="GO:0000287">
    <property type="term" value="F:magnesium ion binding"/>
    <property type="evidence" value="ECO:0007669"/>
    <property type="project" value="UniProtKB-UniRule"/>
</dbReference>
<dbReference type="GO" id="GO:0004642">
    <property type="term" value="F:phosphoribosylformylglycinamidine synthase activity"/>
    <property type="evidence" value="ECO:0007669"/>
    <property type="project" value="UniProtKB-UniRule"/>
</dbReference>
<dbReference type="GO" id="GO:0006189">
    <property type="term" value="P:'de novo' IMP biosynthetic process"/>
    <property type="evidence" value="ECO:0007669"/>
    <property type="project" value="UniProtKB-UniRule"/>
</dbReference>
<dbReference type="CDD" id="cd02203">
    <property type="entry name" value="PurL_repeat1"/>
    <property type="match status" value="1"/>
</dbReference>
<dbReference type="CDD" id="cd02204">
    <property type="entry name" value="PurL_repeat2"/>
    <property type="match status" value="1"/>
</dbReference>
<dbReference type="FunFam" id="3.30.1330.10:FF:000004">
    <property type="entry name" value="Phosphoribosylformylglycinamidine synthase subunit PurL"/>
    <property type="match status" value="1"/>
</dbReference>
<dbReference type="Gene3D" id="3.90.650.10">
    <property type="entry name" value="PurM-like C-terminal domain"/>
    <property type="match status" value="2"/>
</dbReference>
<dbReference type="Gene3D" id="3.30.1330.10">
    <property type="entry name" value="PurM-like, N-terminal domain"/>
    <property type="match status" value="2"/>
</dbReference>
<dbReference type="HAMAP" id="MF_00420">
    <property type="entry name" value="PurL_2"/>
    <property type="match status" value="1"/>
</dbReference>
<dbReference type="InterPro" id="IPR010074">
    <property type="entry name" value="PRibForGlyAmidine_synth_PurL"/>
</dbReference>
<dbReference type="InterPro" id="IPR041609">
    <property type="entry name" value="PurL_linker"/>
</dbReference>
<dbReference type="InterPro" id="IPR010918">
    <property type="entry name" value="PurM-like_C_dom"/>
</dbReference>
<dbReference type="InterPro" id="IPR036676">
    <property type="entry name" value="PurM-like_C_sf"/>
</dbReference>
<dbReference type="InterPro" id="IPR016188">
    <property type="entry name" value="PurM-like_N"/>
</dbReference>
<dbReference type="InterPro" id="IPR036921">
    <property type="entry name" value="PurM-like_N_sf"/>
</dbReference>
<dbReference type="NCBIfam" id="TIGR01736">
    <property type="entry name" value="FGAM_synth_II"/>
    <property type="match status" value="1"/>
</dbReference>
<dbReference type="NCBIfam" id="NF002290">
    <property type="entry name" value="PRK01213.1"/>
    <property type="match status" value="1"/>
</dbReference>
<dbReference type="PANTHER" id="PTHR43555">
    <property type="entry name" value="PHOSPHORIBOSYLFORMYLGLYCINAMIDINE SYNTHASE SUBUNIT PURL"/>
    <property type="match status" value="1"/>
</dbReference>
<dbReference type="PANTHER" id="PTHR43555:SF1">
    <property type="entry name" value="PHOSPHORIBOSYLFORMYLGLYCINAMIDINE SYNTHASE SUBUNIT PURL"/>
    <property type="match status" value="1"/>
</dbReference>
<dbReference type="Pfam" id="PF00586">
    <property type="entry name" value="AIRS"/>
    <property type="match status" value="2"/>
</dbReference>
<dbReference type="Pfam" id="PF02769">
    <property type="entry name" value="AIRS_C"/>
    <property type="match status" value="2"/>
</dbReference>
<dbReference type="Pfam" id="PF18072">
    <property type="entry name" value="FGAR-AT_linker"/>
    <property type="match status" value="1"/>
</dbReference>
<dbReference type="PIRSF" id="PIRSF001587">
    <property type="entry name" value="FGAM_synthase_II"/>
    <property type="match status" value="1"/>
</dbReference>
<dbReference type="SUPFAM" id="SSF56042">
    <property type="entry name" value="PurM C-terminal domain-like"/>
    <property type="match status" value="2"/>
</dbReference>
<dbReference type="SUPFAM" id="SSF55326">
    <property type="entry name" value="PurM N-terminal domain-like"/>
    <property type="match status" value="2"/>
</dbReference>
<accession>C5A4U6</accession>
<evidence type="ECO:0000255" key="1">
    <source>
        <dbReference type="HAMAP-Rule" id="MF_00420"/>
    </source>
</evidence>
<organism>
    <name type="scientific">Thermococcus gammatolerans (strain DSM 15229 / JCM 11827 / EJ3)</name>
    <dbReference type="NCBI Taxonomy" id="593117"/>
    <lineage>
        <taxon>Archaea</taxon>
        <taxon>Methanobacteriati</taxon>
        <taxon>Methanobacteriota</taxon>
        <taxon>Thermococci</taxon>
        <taxon>Thermococcales</taxon>
        <taxon>Thermococcaceae</taxon>
        <taxon>Thermococcus</taxon>
    </lineage>
</organism>
<protein>
    <recommendedName>
        <fullName evidence="1">Phosphoribosylformylglycinamidine synthase subunit PurL</fullName>
        <shortName evidence="1">FGAM synthase</shortName>
        <ecNumber evidence="1">6.3.5.3</ecNumber>
    </recommendedName>
    <alternativeName>
        <fullName evidence="1">Formylglycinamide ribonucleotide amidotransferase subunit II</fullName>
        <shortName evidence="1">FGAR amidotransferase II</shortName>
        <shortName evidence="1">FGAR-AT II</shortName>
    </alternativeName>
    <alternativeName>
        <fullName evidence="1">Glutamine amidotransferase PurL</fullName>
    </alternativeName>
    <alternativeName>
        <fullName evidence="1">Phosphoribosylformylglycinamidine synthase subunit II</fullName>
    </alternativeName>
</protein>
<feature type="chain" id="PRO_1000206050" description="Phosphoribosylformylglycinamidine synthase subunit PurL">
    <location>
        <begin position="1"/>
        <end position="712"/>
    </location>
</feature>
<feature type="active site" evidence="1">
    <location>
        <position position="32"/>
    </location>
</feature>
<feature type="active site" description="Proton acceptor" evidence="1">
    <location>
        <position position="78"/>
    </location>
</feature>
<feature type="binding site" evidence="1">
    <location>
        <position position="35"/>
    </location>
    <ligand>
        <name>ATP</name>
        <dbReference type="ChEBI" id="CHEBI:30616"/>
    </ligand>
</feature>
<feature type="binding site" evidence="1">
    <location>
        <position position="76"/>
    </location>
    <ligand>
        <name>Mg(2+)</name>
        <dbReference type="ChEBI" id="CHEBI:18420"/>
        <label>1</label>
    </ligand>
</feature>
<feature type="binding site" evidence="1">
    <location>
        <begin position="77"/>
        <end position="80"/>
    </location>
    <ligand>
        <name>substrate</name>
    </ligand>
</feature>
<feature type="binding site" evidence="1">
    <location>
        <position position="99"/>
    </location>
    <ligand>
        <name>substrate</name>
    </ligand>
</feature>
<feature type="binding site" evidence="1">
    <location>
        <position position="100"/>
    </location>
    <ligand>
        <name>Mg(2+)</name>
        <dbReference type="ChEBI" id="CHEBI:18420"/>
        <label>2</label>
    </ligand>
</feature>
<feature type="binding site" evidence="1">
    <location>
        <position position="223"/>
    </location>
    <ligand>
        <name>substrate</name>
    </ligand>
</feature>
<feature type="binding site" evidence="1">
    <location>
        <position position="251"/>
    </location>
    <ligand>
        <name>Mg(2+)</name>
        <dbReference type="ChEBI" id="CHEBI:18420"/>
        <label>2</label>
    </ligand>
</feature>
<feature type="binding site" evidence="1">
    <location>
        <begin position="295"/>
        <end position="297"/>
    </location>
    <ligand>
        <name>substrate</name>
    </ligand>
</feature>
<feature type="binding site" evidence="1">
    <location>
        <position position="470"/>
    </location>
    <ligand>
        <name>ATP</name>
        <dbReference type="ChEBI" id="CHEBI:30616"/>
    </ligand>
</feature>
<feature type="binding site" evidence="1">
    <location>
        <position position="507"/>
    </location>
    <ligand>
        <name>ATP</name>
        <dbReference type="ChEBI" id="CHEBI:30616"/>
    </ligand>
</feature>
<feature type="binding site" evidence="1">
    <location>
        <position position="508"/>
    </location>
    <ligand>
        <name>Mg(2+)</name>
        <dbReference type="ChEBI" id="CHEBI:18420"/>
        <label>1</label>
    </ligand>
</feature>
<feature type="binding site" evidence="1">
    <location>
        <position position="510"/>
    </location>
    <ligand>
        <name>substrate</name>
    </ligand>
</feature>
<sequence>MFPHEEKLIRERLGREPNELEWAMLEVMWSEHASYKSSRPWLKLLPTENEHVILGPGEDAGIVKFDDETWVVVGIESHNHPSAVEPYGGAATGVGGIVRDILCMGARPIALLDPIRFGPLEKERNRYLFEYVVKGIADYGNRIGVPTVGGETEFDESLDSYTLVNVACVGIMRPEHLVHSYVTEAGLKLILVGNRTGRDGVHGVTFASEELSENTEEDRSAVQIPDPFTEKLLIEATLEAVYTGRVKALKDLGGGGLTCAASEMAGKKGFGAVIYADRVPLREPGMTPTEVMISESQERMLFAVKPEDVEEIGRIFEEYELEWTVVGETIEEPRFVVYWKGEKVADLPIELLTEVPTIEWELKPYSAEGPVETPDVPFERAFDLVWGSPNILSKRWVWEQYDHEVQGRTVLKPGRDAAVLKINDEYGLAFVADGNPNHSYLNPYQGAMGAVAEVVRNLVSVGAEPLALVDNLNFASPERPEVYWSFAETVRGLADAARAFGLAYVSGNVSFYNEVVDRPIKPTPVVAGLGKVKLEAIPNGGFEEGLLIGVVGLTKPELGGSELFARLGVEGGLAPRVNLEEEKANANGVLEAIRRGLVRAVHDVSRGGLAVALAKMAVAGNTGFTADLSKVPSETTNPIEVAFSESHGRYIVAFPEENLEELKGLFKHFVIIGRTGGSDAVFLWNGWELLRKPVSELKAVHESLPMLLGEEE</sequence>
<gene>
    <name evidence="1" type="primary">purL</name>
    <name type="ordered locus">TGAM_0756</name>
</gene>
<comment type="function">
    <text evidence="1">Part of the phosphoribosylformylglycinamidine synthase complex involved in the purines biosynthetic pathway. Catalyzes the ATP-dependent conversion of formylglycinamide ribonucleotide (FGAR) and glutamine to yield formylglycinamidine ribonucleotide (FGAM) and glutamate. The FGAM synthase complex is composed of three subunits. PurQ produces an ammonia molecule by converting glutamine to glutamate. PurL transfers the ammonia molecule to FGAR to form FGAM in an ATP-dependent manner. PurS interacts with PurQ and PurL and is thought to assist in the transfer of the ammonia molecule from PurQ to PurL.</text>
</comment>
<comment type="catalytic activity">
    <reaction evidence="1">
        <text>N(2)-formyl-N(1)-(5-phospho-beta-D-ribosyl)glycinamide + L-glutamine + ATP + H2O = 2-formamido-N(1)-(5-O-phospho-beta-D-ribosyl)acetamidine + L-glutamate + ADP + phosphate + H(+)</text>
        <dbReference type="Rhea" id="RHEA:17129"/>
        <dbReference type="ChEBI" id="CHEBI:15377"/>
        <dbReference type="ChEBI" id="CHEBI:15378"/>
        <dbReference type="ChEBI" id="CHEBI:29985"/>
        <dbReference type="ChEBI" id="CHEBI:30616"/>
        <dbReference type="ChEBI" id="CHEBI:43474"/>
        <dbReference type="ChEBI" id="CHEBI:58359"/>
        <dbReference type="ChEBI" id="CHEBI:147286"/>
        <dbReference type="ChEBI" id="CHEBI:147287"/>
        <dbReference type="ChEBI" id="CHEBI:456216"/>
        <dbReference type="EC" id="6.3.5.3"/>
    </reaction>
</comment>
<comment type="pathway">
    <text evidence="1">Purine metabolism; IMP biosynthesis via de novo pathway; 5-amino-1-(5-phospho-D-ribosyl)imidazole from N(2)-formyl-N(1)-(5-phospho-D-ribosyl)glycinamide: step 1/2.</text>
</comment>
<comment type="subunit">
    <text evidence="1">Monomer. Part of the FGAM synthase complex composed of 1 PurL, 1 PurQ and 2 PurS subunits.</text>
</comment>
<comment type="subcellular location">
    <subcellularLocation>
        <location evidence="1">Cytoplasm</location>
    </subcellularLocation>
</comment>
<comment type="similarity">
    <text evidence="1">Belongs to the FGAMS family.</text>
</comment>
<keyword id="KW-0067">ATP-binding</keyword>
<keyword id="KW-0963">Cytoplasm</keyword>
<keyword id="KW-0436">Ligase</keyword>
<keyword id="KW-0460">Magnesium</keyword>
<keyword id="KW-0479">Metal-binding</keyword>
<keyword id="KW-0547">Nucleotide-binding</keyword>
<keyword id="KW-0658">Purine biosynthesis</keyword>
<keyword id="KW-1185">Reference proteome</keyword>
<name>PURL_THEGJ</name>
<proteinExistence type="inferred from homology"/>
<reference key="1">
    <citation type="journal article" date="2007" name="Genome Biol.">
        <title>Genome analysis and genome-wide proteomics of Thermococcus gammatolerans, the most radioresistant organism known amongst the Archaea.</title>
        <authorList>
            <person name="Zivanovic Y."/>
            <person name="Armengaud J."/>
            <person name="Lagorce A."/>
            <person name="Leplat C."/>
            <person name="Guerin P."/>
            <person name="Dutertre M."/>
            <person name="Anthouard V."/>
            <person name="Forterre P."/>
            <person name="Wincker P."/>
            <person name="Confalonieri F."/>
        </authorList>
    </citation>
    <scope>NUCLEOTIDE SEQUENCE [LARGE SCALE GENOMIC DNA]</scope>
    <source>
        <strain>DSM 15229 / JCM 11827 / EJ3</strain>
    </source>
</reference>